<dbReference type="EC" id="2.1.1.199" evidence="1"/>
<dbReference type="EMBL" id="CR522870">
    <property type="protein sequence ID" value="CAG37633.1"/>
    <property type="molecule type" value="Genomic_DNA"/>
</dbReference>
<dbReference type="RefSeq" id="WP_011190145.1">
    <property type="nucleotide sequence ID" value="NC_006138.1"/>
</dbReference>
<dbReference type="SMR" id="Q6AJ47"/>
<dbReference type="STRING" id="177439.DP2904"/>
<dbReference type="KEGG" id="dps:DP2904"/>
<dbReference type="eggNOG" id="COG0275">
    <property type="taxonomic scope" value="Bacteria"/>
</dbReference>
<dbReference type="HOGENOM" id="CLU_038422_3_0_7"/>
<dbReference type="OrthoDB" id="9806637at2"/>
<dbReference type="Proteomes" id="UP000000602">
    <property type="component" value="Chromosome"/>
</dbReference>
<dbReference type="GO" id="GO:0005737">
    <property type="term" value="C:cytoplasm"/>
    <property type="evidence" value="ECO:0007669"/>
    <property type="project" value="UniProtKB-SubCell"/>
</dbReference>
<dbReference type="GO" id="GO:0071424">
    <property type="term" value="F:rRNA (cytosine-N4-)-methyltransferase activity"/>
    <property type="evidence" value="ECO:0007669"/>
    <property type="project" value="UniProtKB-UniRule"/>
</dbReference>
<dbReference type="GO" id="GO:0070475">
    <property type="term" value="P:rRNA base methylation"/>
    <property type="evidence" value="ECO:0007669"/>
    <property type="project" value="UniProtKB-UniRule"/>
</dbReference>
<dbReference type="FunFam" id="1.10.150.170:FF:000003">
    <property type="entry name" value="Ribosomal RNA small subunit methyltransferase H"/>
    <property type="match status" value="1"/>
</dbReference>
<dbReference type="Gene3D" id="1.10.150.170">
    <property type="entry name" value="Putative methyltransferase TM0872, insert domain"/>
    <property type="match status" value="1"/>
</dbReference>
<dbReference type="Gene3D" id="3.40.50.150">
    <property type="entry name" value="Vaccinia Virus protein VP39"/>
    <property type="match status" value="1"/>
</dbReference>
<dbReference type="HAMAP" id="MF_01007">
    <property type="entry name" value="16SrRNA_methyltr_H"/>
    <property type="match status" value="1"/>
</dbReference>
<dbReference type="InterPro" id="IPR002903">
    <property type="entry name" value="RsmH"/>
</dbReference>
<dbReference type="InterPro" id="IPR023397">
    <property type="entry name" value="SAM-dep_MeTrfase_MraW_recog"/>
</dbReference>
<dbReference type="InterPro" id="IPR029063">
    <property type="entry name" value="SAM-dependent_MTases_sf"/>
</dbReference>
<dbReference type="NCBIfam" id="TIGR00006">
    <property type="entry name" value="16S rRNA (cytosine(1402)-N(4))-methyltransferase RsmH"/>
    <property type="match status" value="1"/>
</dbReference>
<dbReference type="PANTHER" id="PTHR11265:SF0">
    <property type="entry name" value="12S RRNA N4-METHYLCYTIDINE METHYLTRANSFERASE"/>
    <property type="match status" value="1"/>
</dbReference>
<dbReference type="PANTHER" id="PTHR11265">
    <property type="entry name" value="S-ADENOSYL-METHYLTRANSFERASE MRAW"/>
    <property type="match status" value="1"/>
</dbReference>
<dbReference type="Pfam" id="PF01795">
    <property type="entry name" value="Methyltransf_5"/>
    <property type="match status" value="1"/>
</dbReference>
<dbReference type="PIRSF" id="PIRSF004486">
    <property type="entry name" value="MraW"/>
    <property type="match status" value="1"/>
</dbReference>
<dbReference type="SUPFAM" id="SSF81799">
    <property type="entry name" value="Putative methyltransferase TM0872, insert domain"/>
    <property type="match status" value="1"/>
</dbReference>
<dbReference type="SUPFAM" id="SSF53335">
    <property type="entry name" value="S-adenosyl-L-methionine-dependent methyltransferases"/>
    <property type="match status" value="1"/>
</dbReference>
<evidence type="ECO:0000255" key="1">
    <source>
        <dbReference type="HAMAP-Rule" id="MF_01007"/>
    </source>
</evidence>
<keyword id="KW-0963">Cytoplasm</keyword>
<keyword id="KW-0489">Methyltransferase</keyword>
<keyword id="KW-1185">Reference proteome</keyword>
<keyword id="KW-0698">rRNA processing</keyword>
<keyword id="KW-0949">S-adenosyl-L-methionine</keyword>
<keyword id="KW-0808">Transferase</keyword>
<feature type="chain" id="PRO_0000108618" description="Ribosomal RNA small subunit methyltransferase H">
    <location>
        <begin position="1"/>
        <end position="295"/>
    </location>
</feature>
<feature type="binding site" evidence="1">
    <location>
        <begin position="35"/>
        <end position="37"/>
    </location>
    <ligand>
        <name>S-adenosyl-L-methionine</name>
        <dbReference type="ChEBI" id="CHEBI:59789"/>
    </ligand>
</feature>
<feature type="binding site" evidence="1">
    <location>
        <position position="55"/>
    </location>
    <ligand>
        <name>S-adenosyl-L-methionine</name>
        <dbReference type="ChEBI" id="CHEBI:59789"/>
    </ligand>
</feature>
<feature type="binding site" evidence="1">
    <location>
        <position position="82"/>
    </location>
    <ligand>
        <name>S-adenosyl-L-methionine</name>
        <dbReference type="ChEBI" id="CHEBI:59789"/>
    </ligand>
</feature>
<feature type="binding site" evidence="1">
    <location>
        <position position="103"/>
    </location>
    <ligand>
        <name>S-adenosyl-L-methionine</name>
        <dbReference type="ChEBI" id="CHEBI:59789"/>
    </ligand>
</feature>
<feature type="binding site" evidence="1">
    <location>
        <position position="110"/>
    </location>
    <ligand>
        <name>S-adenosyl-L-methionine</name>
        <dbReference type="ChEBI" id="CHEBI:59789"/>
    </ligand>
</feature>
<gene>
    <name evidence="1" type="primary">rsmH</name>
    <name type="synonym">mraW</name>
    <name type="ordered locus">DP2904</name>
</gene>
<accession>Q6AJ47</accession>
<name>RSMH_DESPS</name>
<proteinExistence type="inferred from homology"/>
<organism>
    <name type="scientific">Desulfotalea psychrophila (strain LSv54 / DSM 12343)</name>
    <dbReference type="NCBI Taxonomy" id="177439"/>
    <lineage>
        <taxon>Bacteria</taxon>
        <taxon>Pseudomonadati</taxon>
        <taxon>Thermodesulfobacteriota</taxon>
        <taxon>Desulfobulbia</taxon>
        <taxon>Desulfobulbales</taxon>
        <taxon>Desulfocapsaceae</taxon>
        <taxon>Desulfotalea</taxon>
    </lineage>
</organism>
<comment type="function">
    <text evidence="1">Specifically methylates the N4 position of cytidine in position 1402 (C1402) of 16S rRNA.</text>
</comment>
<comment type="catalytic activity">
    <reaction evidence="1">
        <text>cytidine(1402) in 16S rRNA + S-adenosyl-L-methionine = N(4)-methylcytidine(1402) in 16S rRNA + S-adenosyl-L-homocysteine + H(+)</text>
        <dbReference type="Rhea" id="RHEA:42928"/>
        <dbReference type="Rhea" id="RHEA-COMP:10286"/>
        <dbReference type="Rhea" id="RHEA-COMP:10287"/>
        <dbReference type="ChEBI" id="CHEBI:15378"/>
        <dbReference type="ChEBI" id="CHEBI:57856"/>
        <dbReference type="ChEBI" id="CHEBI:59789"/>
        <dbReference type="ChEBI" id="CHEBI:74506"/>
        <dbReference type="ChEBI" id="CHEBI:82748"/>
        <dbReference type="EC" id="2.1.1.199"/>
    </reaction>
</comment>
<comment type="subcellular location">
    <subcellularLocation>
        <location evidence="1">Cytoplasm</location>
    </subcellularLocation>
</comment>
<comment type="similarity">
    <text evidence="1">Belongs to the methyltransferase superfamily. RsmH family.</text>
</comment>
<protein>
    <recommendedName>
        <fullName evidence="1">Ribosomal RNA small subunit methyltransferase H</fullName>
        <ecNumber evidence="1">2.1.1.199</ecNumber>
    </recommendedName>
    <alternativeName>
        <fullName evidence="1">16S rRNA m(4)C1402 methyltransferase</fullName>
    </alternativeName>
    <alternativeName>
        <fullName evidence="1">rRNA (cytosine-N(4)-)-methyltransferase RsmH</fullName>
    </alternativeName>
</protein>
<sequence>MDAEKIHISVLLEETMEFLCLQPGGIYVDGTMGLGGHTSAILERTAPDGRVVAFEWDENAIKASRERLAPYGERLTLVRRNFAEIGVGLTEAGISHIDGLLIDIGLSSLQLDTGTRGFSFQRDDDLDMRMDERGEMTAATIIATCTEEQLADLFYCYGEERQARPIAAAIVAARKLEPIQTTKQLVRVVARAIPKRFHPKKIHVATKVFQALRIAVNTELENLSKIIDDAGEFLKPGSRFCIISFHSLEDRIVKRKFRENPNFKVITNKPVKAGEEELDRNYRSRSALLRVAEKV</sequence>
<reference key="1">
    <citation type="journal article" date="2004" name="Environ. Microbiol.">
        <title>The genome of Desulfotalea psychrophila, a sulfate-reducing bacterium from permanently cold Arctic sediments.</title>
        <authorList>
            <person name="Rabus R."/>
            <person name="Ruepp A."/>
            <person name="Frickey T."/>
            <person name="Rattei T."/>
            <person name="Fartmann B."/>
            <person name="Stark M."/>
            <person name="Bauer M."/>
            <person name="Zibat A."/>
            <person name="Lombardot T."/>
            <person name="Becker I."/>
            <person name="Amann J."/>
            <person name="Gellner K."/>
            <person name="Teeling H."/>
            <person name="Leuschner W.D."/>
            <person name="Gloeckner F.-O."/>
            <person name="Lupas A.N."/>
            <person name="Amann R."/>
            <person name="Klenk H.-P."/>
        </authorList>
    </citation>
    <scope>NUCLEOTIDE SEQUENCE [LARGE SCALE GENOMIC DNA]</scope>
    <source>
        <strain>DSM 12343 / LSv54</strain>
    </source>
</reference>